<proteinExistence type="inferred from homology"/>
<dbReference type="EC" id="2.7.11.24"/>
<dbReference type="EMBL" id="HE600936">
    <property type="protein sequence ID" value="CAP35763.2"/>
    <property type="molecule type" value="Genomic_DNA"/>
</dbReference>
<dbReference type="SMR" id="A8XSC1"/>
<dbReference type="FunCoup" id="A8XSC1">
    <property type="interactions" value="2635"/>
</dbReference>
<dbReference type="STRING" id="6238.A8XSC1"/>
<dbReference type="WormBase" id="CBG18286">
    <property type="protein sequence ID" value="CBP39975"/>
    <property type="gene ID" value="WBGene00037733"/>
    <property type="gene designation" value="Cbr-lit-1"/>
</dbReference>
<dbReference type="eggNOG" id="KOG0664">
    <property type="taxonomic scope" value="Eukaryota"/>
</dbReference>
<dbReference type="HOGENOM" id="CLU_000288_133_2_1"/>
<dbReference type="InParanoid" id="A8XSC1"/>
<dbReference type="OMA" id="RLNMTHE"/>
<dbReference type="Proteomes" id="UP000008549">
    <property type="component" value="Unassembled WGS sequence"/>
</dbReference>
<dbReference type="GO" id="GO:0005938">
    <property type="term" value="C:cell cortex"/>
    <property type="evidence" value="ECO:0007669"/>
    <property type="project" value="UniProtKB-SubCell"/>
</dbReference>
<dbReference type="GO" id="GO:0005737">
    <property type="term" value="C:cytoplasm"/>
    <property type="evidence" value="ECO:0000318"/>
    <property type="project" value="GO_Central"/>
</dbReference>
<dbReference type="GO" id="GO:0005634">
    <property type="term" value="C:nucleus"/>
    <property type="evidence" value="ECO:0000318"/>
    <property type="project" value="GO_Central"/>
</dbReference>
<dbReference type="GO" id="GO:0005524">
    <property type="term" value="F:ATP binding"/>
    <property type="evidence" value="ECO:0007669"/>
    <property type="project" value="UniProtKB-KW"/>
</dbReference>
<dbReference type="GO" id="GO:0004707">
    <property type="term" value="F:MAP kinase activity"/>
    <property type="evidence" value="ECO:0007669"/>
    <property type="project" value="UniProtKB-EC"/>
</dbReference>
<dbReference type="GO" id="GO:0046872">
    <property type="term" value="F:metal ion binding"/>
    <property type="evidence" value="ECO:0007669"/>
    <property type="project" value="UniProtKB-KW"/>
</dbReference>
<dbReference type="GO" id="GO:0106310">
    <property type="term" value="F:protein serine kinase activity"/>
    <property type="evidence" value="ECO:0007669"/>
    <property type="project" value="RHEA"/>
</dbReference>
<dbReference type="GO" id="GO:0004674">
    <property type="term" value="F:protein serine/threonine kinase activity"/>
    <property type="evidence" value="ECO:0000318"/>
    <property type="project" value="GO_Central"/>
</dbReference>
<dbReference type="GO" id="GO:0035556">
    <property type="term" value="P:intracellular signal transduction"/>
    <property type="evidence" value="ECO:0000318"/>
    <property type="project" value="GO_Central"/>
</dbReference>
<dbReference type="GO" id="GO:0016055">
    <property type="term" value="P:Wnt signaling pathway"/>
    <property type="evidence" value="ECO:0007669"/>
    <property type="project" value="UniProtKB-KW"/>
</dbReference>
<dbReference type="CDD" id="cd07853">
    <property type="entry name" value="STKc_NLK"/>
    <property type="match status" value="1"/>
</dbReference>
<dbReference type="FunFam" id="1.10.510.10:FF:000162">
    <property type="entry name" value="Mitogen-activated protein kinase"/>
    <property type="match status" value="1"/>
</dbReference>
<dbReference type="FunFam" id="3.30.200.20:FF:000961">
    <property type="entry name" value="Mitogen-activated protein kinase"/>
    <property type="match status" value="1"/>
</dbReference>
<dbReference type="Gene3D" id="3.30.200.20">
    <property type="entry name" value="Phosphorylase Kinase, domain 1"/>
    <property type="match status" value="2"/>
</dbReference>
<dbReference type="Gene3D" id="1.10.510.10">
    <property type="entry name" value="Transferase(Phosphotransferase) domain 1"/>
    <property type="match status" value="1"/>
</dbReference>
<dbReference type="InterPro" id="IPR011009">
    <property type="entry name" value="Kinase-like_dom_sf"/>
</dbReference>
<dbReference type="InterPro" id="IPR050117">
    <property type="entry name" value="MAP_kinase"/>
</dbReference>
<dbReference type="InterPro" id="IPR000719">
    <property type="entry name" value="Prot_kinase_dom"/>
</dbReference>
<dbReference type="InterPro" id="IPR017441">
    <property type="entry name" value="Protein_kinase_ATP_BS"/>
</dbReference>
<dbReference type="InterPro" id="IPR008271">
    <property type="entry name" value="Ser/Thr_kinase_AS"/>
</dbReference>
<dbReference type="PANTHER" id="PTHR24055">
    <property type="entry name" value="MITOGEN-ACTIVATED PROTEIN KINASE"/>
    <property type="match status" value="1"/>
</dbReference>
<dbReference type="Pfam" id="PF00069">
    <property type="entry name" value="Pkinase"/>
    <property type="match status" value="2"/>
</dbReference>
<dbReference type="SMART" id="SM00220">
    <property type="entry name" value="S_TKc"/>
    <property type="match status" value="1"/>
</dbReference>
<dbReference type="SUPFAM" id="SSF56112">
    <property type="entry name" value="Protein kinase-like (PK-like)"/>
    <property type="match status" value="1"/>
</dbReference>
<dbReference type="PROSITE" id="PS00107">
    <property type="entry name" value="PROTEIN_KINASE_ATP"/>
    <property type="match status" value="1"/>
</dbReference>
<dbReference type="PROSITE" id="PS50011">
    <property type="entry name" value="PROTEIN_KINASE_DOM"/>
    <property type="match status" value="1"/>
</dbReference>
<dbReference type="PROSITE" id="PS00108">
    <property type="entry name" value="PROTEIN_KINASE_ST"/>
    <property type="match status" value="1"/>
</dbReference>
<organism>
    <name type="scientific">Caenorhabditis briggsae</name>
    <dbReference type="NCBI Taxonomy" id="6238"/>
    <lineage>
        <taxon>Eukaryota</taxon>
        <taxon>Metazoa</taxon>
        <taxon>Ecdysozoa</taxon>
        <taxon>Nematoda</taxon>
        <taxon>Chromadorea</taxon>
        <taxon>Rhabditida</taxon>
        <taxon>Rhabditina</taxon>
        <taxon>Rhabditomorpha</taxon>
        <taxon>Rhabditoidea</taxon>
        <taxon>Rhabditidae</taxon>
        <taxon>Peloderinae</taxon>
        <taxon>Caenorhabditis</taxon>
    </lineage>
</organism>
<feature type="chain" id="PRO_0000372801" description="Serine/threonine kinase NLK">
    <location>
        <begin position="1"/>
        <end position="657"/>
    </location>
</feature>
<feature type="domain" description="Protein kinase" evidence="3">
    <location>
        <begin position="208"/>
        <end position="554"/>
    </location>
</feature>
<feature type="active site" description="Proton acceptor" evidence="3 4">
    <location>
        <position position="391"/>
    </location>
</feature>
<feature type="binding site" evidence="3">
    <location>
        <begin position="214"/>
        <end position="222"/>
    </location>
    <ligand>
        <name>ATP</name>
        <dbReference type="ChEBI" id="CHEBI:30616"/>
    </ligand>
</feature>
<feature type="binding site" evidence="3">
    <location>
        <position position="237"/>
    </location>
    <ligand>
        <name>ATP</name>
        <dbReference type="ChEBI" id="CHEBI:30616"/>
    </ligand>
</feature>
<sequence>MPSSTLLELAPNTHSKCKFETRNRSSSSSSGCSSSSTELYDLAAAHAALISRQQQILNQGIPIIPEHQLAAAAVAHHHHQLHPSVQHQLVAGHHHHHLPQVAHHPAILPRSDVIQQPSHFALHQHLQNLVQQQQQQQALHHHQQLVGDMALVSHTHPAAVGSTTCYEKNPQKQQQVPQIPTQPQVAHVSSNAILAAAQPFYQPPVQDSQPDRPIGYGAFGVVWSVTDPRSGKRVALKKMPNVFQNLASCKRVFREIKMLSSFRHDNVLSLLDILQPANPSFFQEFTSWHLTPSIHHQRLISHIKPICLFFVLPLVSLLCAHMYVCMWWHGTALLEGRKETITYVLTELMQSDLHKIIVSPQTLTIDHVKVFVYQILRGLKYLHTANILHRDIKPGNLLVNSNCILKICDFGLARTWDSRDRLNMTHEVVTQYYRAPELLMGARRYTGAVDIWSVGCIFAELLQRKILFQAAGPIEQLQMIIDLLGTPSQEAMKYACEGAKNHVLRAGPRAPNLQSLYRLSQQTTDDAVDLLVKLLKFNPDERISVEEALSHPYLEEGRLRFHSCMCSCCYTKANVPSRIFSQELDPKHESPFDPKWEKDMSRLSMFELREKMYQFVMDRPALYGVALCINPQSAAYKNFASSSVAQASELPPSPQAW</sequence>
<accession>A8XSC1</accession>
<protein>
    <recommendedName>
        <fullName evidence="2">Serine/threonine kinase NLK</fullName>
        <ecNumber>2.7.11.24</ecNumber>
    </recommendedName>
    <alternativeName>
        <fullName>Loss of intestine protein 1</fullName>
    </alternativeName>
    <alternativeName>
        <fullName evidence="2">Nemo-like kinase</fullName>
    </alternativeName>
</protein>
<keyword id="KW-0067">ATP-binding</keyword>
<keyword id="KW-0963">Cytoplasm</keyword>
<keyword id="KW-0217">Developmental protein</keyword>
<keyword id="KW-0418">Kinase</keyword>
<keyword id="KW-0460">Magnesium</keyword>
<keyword id="KW-0479">Metal-binding</keyword>
<keyword id="KW-0547">Nucleotide-binding</keyword>
<keyword id="KW-0539">Nucleus</keyword>
<keyword id="KW-1185">Reference proteome</keyword>
<keyword id="KW-0723">Serine/threonine-protein kinase</keyword>
<keyword id="KW-0808">Transferase</keyword>
<keyword id="KW-0879">Wnt signaling pathway</keyword>
<gene>
    <name evidence="5" type="primary">lit-1</name>
    <name evidence="2" type="synonym">nlk</name>
    <name evidence="5" type="ORF">CBG18286</name>
</gene>
<comment type="function">
    <text evidence="2">Has a role in the Wnt signaling pathway controlling the asymmetry of cell divisions during embryogenesis (By similarity). Operates in the AB and EMS cell lineages influencing cell specification (By similarity). Required for body wall muscle development, endoderm development, pop-1 asymmetry and T-cell division asymmetry (By similarity). Component of the beta-catenin-lit-1 complex which promotes the phosphorylation, down-regulation and subcellular relocation of pop-1 (By similarity). Regulates plp-1 nuclear localization in embryos (By similarity). Plays a role in male tail tip morphogenesis (By similarity).</text>
</comment>
<comment type="catalytic activity">
    <reaction evidence="1">
        <text>L-seryl-[protein] + ATP = O-phospho-L-seryl-[protein] + ADP + H(+)</text>
        <dbReference type="Rhea" id="RHEA:17989"/>
        <dbReference type="Rhea" id="RHEA-COMP:9863"/>
        <dbReference type="Rhea" id="RHEA-COMP:11604"/>
        <dbReference type="ChEBI" id="CHEBI:15378"/>
        <dbReference type="ChEBI" id="CHEBI:29999"/>
        <dbReference type="ChEBI" id="CHEBI:30616"/>
        <dbReference type="ChEBI" id="CHEBI:83421"/>
        <dbReference type="ChEBI" id="CHEBI:456216"/>
        <dbReference type="EC" id="2.7.11.24"/>
    </reaction>
</comment>
<comment type="catalytic activity">
    <reaction evidence="1">
        <text>L-threonyl-[protein] + ATP = O-phospho-L-threonyl-[protein] + ADP + H(+)</text>
        <dbReference type="Rhea" id="RHEA:46608"/>
        <dbReference type="Rhea" id="RHEA-COMP:11060"/>
        <dbReference type="Rhea" id="RHEA-COMP:11605"/>
        <dbReference type="ChEBI" id="CHEBI:15378"/>
        <dbReference type="ChEBI" id="CHEBI:30013"/>
        <dbReference type="ChEBI" id="CHEBI:30616"/>
        <dbReference type="ChEBI" id="CHEBI:61977"/>
        <dbReference type="ChEBI" id="CHEBI:456216"/>
        <dbReference type="EC" id="2.7.11.24"/>
    </reaction>
</comment>
<comment type="cofactor">
    <cofactor evidence="1">
        <name>Mg(2+)</name>
        <dbReference type="ChEBI" id="CHEBI:18420"/>
    </cofactor>
</comment>
<comment type="subunit">
    <text evidence="2">Component of the beta-catenin-lit-1 complex (also called the lit-1/wrm-1 complex or the wrm-1/lit-1 kinase complex) at least composed of lit-1 and wrm-1 (By similarity). Interacts with wrm-1 (via N-terminus); the interaction is direct and activates lit-1 kinase activity which leads to the phosphorylation of pop-1 (By similarity). This promotes pop-1 interaction with par-5 and translocation of pop-1 from the nucleus to the cytoplasm (By similarity). Interacts with pop-1 (when phosphorylated on 'Ser-125'); the interaction is dependent on the beta-catenin-lit-1 complex (By similarity).</text>
</comment>
<comment type="subcellular location">
    <subcellularLocation>
        <location evidence="2">Cytoplasm</location>
        <location evidence="2">Cell cortex</location>
    </subcellularLocation>
    <subcellularLocation>
        <location evidence="2">Nucleus</location>
    </subcellularLocation>
    <text evidence="2">Located in the anterior cell cortex before and during asymmetric cell division. After division, located preferentially in the nucleus of the posterior daughter cell (By similarity). Localizes to the nucleus in hyp9 and hyp10 cells prior to male tail tip morphogenesis (By similarity).</text>
</comment>
<comment type="similarity">
    <text evidence="3">Belongs to the protein kinase superfamily. Ser/Thr protein kinase family.</text>
</comment>
<evidence type="ECO:0000250" key="1">
    <source>
        <dbReference type="UniProtKB" id="O54949"/>
    </source>
</evidence>
<evidence type="ECO:0000250" key="2">
    <source>
        <dbReference type="UniProtKB" id="Q9U9Y8"/>
    </source>
</evidence>
<evidence type="ECO:0000255" key="3">
    <source>
        <dbReference type="PROSITE-ProRule" id="PRU00159"/>
    </source>
</evidence>
<evidence type="ECO:0000255" key="4">
    <source>
        <dbReference type="PROSITE-ProRule" id="PRU10027"/>
    </source>
</evidence>
<evidence type="ECO:0000312" key="5">
    <source>
        <dbReference type="WormBase" id="CBG18286"/>
    </source>
</evidence>
<name>NLK_CAEBR</name>
<reference key="1">
    <citation type="journal article" date="2003" name="PLoS Biol.">
        <title>The genome sequence of Caenorhabditis briggsae: a platform for comparative genomics.</title>
        <authorList>
            <person name="Stein L.D."/>
            <person name="Bao Z."/>
            <person name="Blasiar D."/>
            <person name="Blumenthal T."/>
            <person name="Brent M.R."/>
            <person name="Chen N."/>
            <person name="Chinwalla A."/>
            <person name="Clarke L."/>
            <person name="Clee C."/>
            <person name="Coghlan A."/>
            <person name="Coulson A."/>
            <person name="D'Eustachio P."/>
            <person name="Fitch D.H.A."/>
            <person name="Fulton L.A."/>
            <person name="Fulton R.E."/>
            <person name="Griffiths-Jones S."/>
            <person name="Harris T.W."/>
            <person name="Hillier L.W."/>
            <person name="Kamath R."/>
            <person name="Kuwabara P.E."/>
            <person name="Mardis E.R."/>
            <person name="Marra M.A."/>
            <person name="Miner T.L."/>
            <person name="Minx P."/>
            <person name="Mullikin J.C."/>
            <person name="Plumb R.W."/>
            <person name="Rogers J."/>
            <person name="Schein J.E."/>
            <person name="Sohrmann M."/>
            <person name="Spieth J."/>
            <person name="Stajich J.E."/>
            <person name="Wei C."/>
            <person name="Willey D."/>
            <person name="Wilson R.K."/>
            <person name="Durbin R.M."/>
            <person name="Waterston R.H."/>
        </authorList>
    </citation>
    <scope>NUCLEOTIDE SEQUENCE [LARGE SCALE GENOMIC DNA]</scope>
    <source>
        <strain>AF16</strain>
    </source>
</reference>